<feature type="chain" id="PRO_0000129166" description="Mitochondrial intermembrane space import and assembly protein 40">
    <location>
        <begin position="1"/>
        <end position="139"/>
    </location>
</feature>
<feature type="domain" description="CHCH" evidence="3">
    <location>
        <begin position="61"/>
        <end position="105"/>
    </location>
</feature>
<feature type="region of interest" description="Disordered" evidence="4">
    <location>
        <begin position="102"/>
        <end position="139"/>
    </location>
</feature>
<feature type="short sequence motif" description="Cx9C motif 1" evidence="3">
    <location>
        <begin position="64"/>
        <end position="74"/>
    </location>
</feature>
<feature type="short sequence motif" description="Cx9C motif 2" evidence="3">
    <location>
        <begin position="87"/>
        <end position="97"/>
    </location>
</feature>
<feature type="compositionally biased region" description="Acidic residues" evidence="4">
    <location>
        <begin position="106"/>
        <end position="124"/>
    </location>
</feature>
<feature type="disulfide bond" description="Redox-active" evidence="2">
    <location>
        <begin position="53"/>
        <end position="55"/>
    </location>
</feature>
<feature type="disulfide bond" evidence="3">
    <location>
        <begin position="64"/>
        <end position="97"/>
    </location>
</feature>
<feature type="disulfide bond" evidence="3">
    <location>
        <begin position="74"/>
        <end position="87"/>
    </location>
</feature>
<feature type="strand" evidence="7">
    <location>
        <begin position="4"/>
        <end position="7"/>
    </location>
</feature>
<feature type="strand" evidence="7">
    <location>
        <begin position="10"/>
        <end position="15"/>
    </location>
</feature>
<accession>Q8VEA4</accession>
<organism>
    <name type="scientific">Mus musculus</name>
    <name type="common">Mouse</name>
    <dbReference type="NCBI Taxonomy" id="10090"/>
    <lineage>
        <taxon>Eukaryota</taxon>
        <taxon>Metazoa</taxon>
        <taxon>Chordata</taxon>
        <taxon>Craniata</taxon>
        <taxon>Vertebrata</taxon>
        <taxon>Euteleostomi</taxon>
        <taxon>Mammalia</taxon>
        <taxon>Eutheria</taxon>
        <taxon>Euarchontoglires</taxon>
        <taxon>Glires</taxon>
        <taxon>Rodentia</taxon>
        <taxon>Myomorpha</taxon>
        <taxon>Muroidea</taxon>
        <taxon>Muridae</taxon>
        <taxon>Murinae</taxon>
        <taxon>Mus</taxon>
        <taxon>Mus</taxon>
    </lineage>
</organism>
<proteinExistence type="evidence at protein level"/>
<gene>
    <name type="primary">Chchd4</name>
    <name type="synonym">Mia40</name>
</gene>
<protein>
    <recommendedName>
        <fullName>Mitochondrial intermembrane space import and assembly protein 40</fullName>
    </recommendedName>
    <alternativeName>
        <fullName>Coiled-coil-helix-coiled-coil-helix domain-containing protein 4</fullName>
    </alternativeName>
</protein>
<sequence>MSYCRQEGKDRIIFVTKEDHETPSSAELVADDPNDPYEEHGLILPNGDINWNCPCLGGMASGPCGEQFKSAFSCFHYSTEDIKGSDCIDQFRAMQECMQKYPDLYPQDEEEEEEAKPVEPVEETADTKVSAAKEQGTSS</sequence>
<keyword id="KW-0002">3D-structure</keyword>
<keyword id="KW-1015">Disulfide bond</keyword>
<keyword id="KW-0496">Mitochondrion</keyword>
<keyword id="KW-0560">Oxidoreductase</keyword>
<keyword id="KW-0653">Protein transport</keyword>
<keyword id="KW-0676">Redox-active center</keyword>
<keyword id="KW-1185">Reference proteome</keyword>
<keyword id="KW-0811">Translocation</keyword>
<keyword id="KW-0813">Transport</keyword>
<dbReference type="EMBL" id="AK012745">
    <property type="protein sequence ID" value="BAC25375.1"/>
    <property type="molecule type" value="mRNA"/>
</dbReference>
<dbReference type="EMBL" id="BC019405">
    <property type="protein sequence ID" value="AAH19405.1"/>
    <property type="molecule type" value="mRNA"/>
</dbReference>
<dbReference type="CCDS" id="CCDS20367.1"/>
<dbReference type="RefSeq" id="NP_598689.1">
    <property type="nucleotide sequence ID" value="NM_133928.2"/>
</dbReference>
<dbReference type="PDB" id="8QNS">
    <property type="method" value="X-ray"/>
    <property type="resolution" value="3.21 A"/>
    <property type="chains" value="M/N/O/P=1-27"/>
</dbReference>
<dbReference type="PDBsum" id="8QNS"/>
<dbReference type="SMR" id="Q8VEA4"/>
<dbReference type="BioGRID" id="215197">
    <property type="interactions" value="6"/>
</dbReference>
<dbReference type="FunCoup" id="Q8VEA4">
    <property type="interactions" value="1445"/>
</dbReference>
<dbReference type="STRING" id="10090.ENSMUSP00000041380"/>
<dbReference type="PhosphoSitePlus" id="Q8VEA4"/>
<dbReference type="SwissPalm" id="Q8VEA4"/>
<dbReference type="PaxDb" id="10090-ENSMUSP00000041380"/>
<dbReference type="PeptideAtlas" id="Q8VEA4"/>
<dbReference type="ProteomicsDB" id="252550"/>
<dbReference type="Pumba" id="Q8VEA4"/>
<dbReference type="Ensembl" id="ENSMUST00000040835.9">
    <property type="protein sequence ID" value="ENSMUSP00000041380.8"/>
    <property type="gene ID" value="ENSMUSG00000034203.9"/>
</dbReference>
<dbReference type="GeneID" id="72170"/>
<dbReference type="KEGG" id="mmu:72170"/>
<dbReference type="UCSC" id="uc009cyb.1">
    <property type="organism name" value="mouse"/>
</dbReference>
<dbReference type="AGR" id="MGI:1919420"/>
<dbReference type="CTD" id="131474"/>
<dbReference type="MGI" id="MGI:1919420">
    <property type="gene designation" value="Chchd4"/>
</dbReference>
<dbReference type="VEuPathDB" id="HostDB:ENSMUSG00000034203"/>
<dbReference type="eggNOG" id="KOG4149">
    <property type="taxonomic scope" value="Eukaryota"/>
</dbReference>
<dbReference type="GeneTree" id="ENSGT00390000013132"/>
<dbReference type="HOGENOM" id="CLU_127296_1_0_1"/>
<dbReference type="InParanoid" id="Q8VEA4"/>
<dbReference type="OMA" id="MECAMRT"/>
<dbReference type="OrthoDB" id="7481291at2759"/>
<dbReference type="PhylomeDB" id="Q8VEA4"/>
<dbReference type="TreeFam" id="TF314054"/>
<dbReference type="BioGRID-ORCS" id="72170">
    <property type="hits" value="15 hits in 115 CRISPR screens"/>
</dbReference>
<dbReference type="ChiTaRS" id="Chchd4">
    <property type="organism name" value="mouse"/>
</dbReference>
<dbReference type="PRO" id="PR:Q8VEA4"/>
<dbReference type="Proteomes" id="UP000000589">
    <property type="component" value="Chromosome 6"/>
</dbReference>
<dbReference type="RNAct" id="Q8VEA4">
    <property type="molecule type" value="protein"/>
</dbReference>
<dbReference type="Bgee" id="ENSMUSG00000034203">
    <property type="expression patterns" value="Expressed in otic placode and 251 other cell types or tissues"/>
</dbReference>
<dbReference type="GO" id="GO:0005758">
    <property type="term" value="C:mitochondrial intermembrane space"/>
    <property type="evidence" value="ECO:0000250"/>
    <property type="project" value="UniProtKB"/>
</dbReference>
<dbReference type="GO" id="GO:0005739">
    <property type="term" value="C:mitochondrion"/>
    <property type="evidence" value="ECO:0000314"/>
    <property type="project" value="MGI"/>
</dbReference>
<dbReference type="GO" id="GO:0015035">
    <property type="term" value="F:protein-disulfide reductase activity"/>
    <property type="evidence" value="ECO:0000250"/>
    <property type="project" value="UniProtKB"/>
</dbReference>
<dbReference type="GO" id="GO:1990830">
    <property type="term" value="P:cellular response to leukemia inhibitory factor"/>
    <property type="evidence" value="ECO:0000270"/>
    <property type="project" value="MGI"/>
</dbReference>
<dbReference type="GO" id="GO:0034599">
    <property type="term" value="P:cellular response to oxidative stress"/>
    <property type="evidence" value="ECO:0000314"/>
    <property type="project" value="MGI"/>
</dbReference>
<dbReference type="GO" id="GO:0072655">
    <property type="term" value="P:establishment of protein localization to mitochondrion"/>
    <property type="evidence" value="ECO:0000315"/>
    <property type="project" value="MGI"/>
</dbReference>
<dbReference type="GO" id="GO:0160203">
    <property type="term" value="P:mitochondrial disulfide relay system"/>
    <property type="evidence" value="ECO:0000250"/>
    <property type="project" value="UniProtKB"/>
</dbReference>
<dbReference type="GO" id="GO:0043504">
    <property type="term" value="P:mitochondrial DNA repair"/>
    <property type="evidence" value="ECO:0000314"/>
    <property type="project" value="MGI"/>
</dbReference>
<dbReference type="GO" id="GO:0033108">
    <property type="term" value="P:mitochondrial respiratory chain complex assembly"/>
    <property type="evidence" value="ECO:0000315"/>
    <property type="project" value="UniProtKB"/>
</dbReference>
<dbReference type="GO" id="GO:1901857">
    <property type="term" value="P:positive regulation of cellular respiration"/>
    <property type="evidence" value="ECO:0000315"/>
    <property type="project" value="MGI"/>
</dbReference>
<dbReference type="GO" id="GO:0046825">
    <property type="term" value="P:regulation of protein export from nucleus"/>
    <property type="evidence" value="ECO:0000315"/>
    <property type="project" value="MGI"/>
</dbReference>
<dbReference type="FunFam" id="1.10.287.2900:FF:000001">
    <property type="entry name" value="mitochondrial intermembrane space import and assembly protein 40"/>
    <property type="match status" value="1"/>
</dbReference>
<dbReference type="Gene3D" id="1.10.287.2900">
    <property type="match status" value="1"/>
</dbReference>
<dbReference type="InterPro" id="IPR010625">
    <property type="entry name" value="CHCH"/>
</dbReference>
<dbReference type="InterPro" id="IPR039289">
    <property type="entry name" value="CHCHD4"/>
</dbReference>
<dbReference type="PANTHER" id="PTHR21622">
    <property type="entry name" value="COILED-COIL-HELIX-COILED-COIL-HELIX DOMAIN CONTAINING 4"/>
    <property type="match status" value="1"/>
</dbReference>
<dbReference type="PANTHER" id="PTHR21622:SF8">
    <property type="entry name" value="MITOCHONDRIAL INTERMEMBRANE SPACE IMPORT AND ASSEMBLY PROTEIN 40"/>
    <property type="match status" value="1"/>
</dbReference>
<dbReference type="Pfam" id="PF06747">
    <property type="entry name" value="CHCH"/>
    <property type="match status" value="1"/>
</dbReference>
<dbReference type="PROSITE" id="PS51808">
    <property type="entry name" value="CHCH"/>
    <property type="match status" value="1"/>
</dbReference>
<evidence type="ECO:0000250" key="1"/>
<evidence type="ECO:0000250" key="2">
    <source>
        <dbReference type="UniProtKB" id="Q8N4Q1"/>
    </source>
</evidence>
<evidence type="ECO:0000255" key="3">
    <source>
        <dbReference type="PROSITE-ProRule" id="PRU01150"/>
    </source>
</evidence>
<evidence type="ECO:0000256" key="4">
    <source>
        <dbReference type="SAM" id="MobiDB-lite"/>
    </source>
</evidence>
<evidence type="ECO:0000269" key="5">
    <source>
    </source>
</evidence>
<evidence type="ECO:0000269" key="6">
    <source>
    </source>
</evidence>
<evidence type="ECO:0007829" key="7">
    <source>
        <dbReference type="PDB" id="8QNS"/>
    </source>
</evidence>
<name>MIA40_MOUSE</name>
<comment type="function">
    <text evidence="2 6">Central component of a redox-sensitive mitochondrial intermembrane space import machinery which is required for the biogenesis of respiratory chain complexes (PubMed:26004228). Functions as chaperone and catalyzes the formation of disulfide bonds in substrate proteins, such as COX17, COX19, MICU1 and COA7. Required for the import and folding of small cysteine-containing proteins (small Tim) in the mitochondrial intermembrane space (IMS). Required for the import of COA7 in the IMS. Precursor proteins to be imported into the IMS are translocated in their reduced form into the mitochondria. The oxidized form of CHCHD4/MIA40 forms a transient intermolecular disulfide bridge with the reduced precursor protein, resulting in oxidation of the precursor protein that now contains an intramolecular disulfide bond and is able to undergo folding in the IMS. Reduced CHCHD4/MIA40 is then reoxidized by GFER/ERV1 via a disulfide relay system. Mediates formation of disulfide bond in MICU1 in the IMS, promoting formation of the MICU1-MICU2 heterodimer that regulates mitochondrial calcium uptake.</text>
</comment>
<comment type="subunit">
    <text evidence="2">Monomer. Can form homooligomers. Interacts with GFER and forms transient disulfide bonds with GFER. Interacts with MICU1. Interacts with COX19 forming transient intermolecular disulfide bridges. Interacts with COA7 through transient intermolecular disulfide bonds. Interacts with AIFM1; the interaction increases in presence of NADH. Interacts with NDUFB10.</text>
</comment>
<comment type="subcellular location">
    <subcellularLocation>
        <location evidence="2">Mitochondrion intermembrane space</location>
    </subcellularLocation>
</comment>
<comment type="tissue specificity">
    <text evidence="5">Widely expressed. Present at high level in liver and kidney, followed by lung, brain, heart and spleen (at protein level).</text>
</comment>
<comment type="domain">
    <text evidence="1">The CHCH domain contains a conserved twin Cys-X(9)-Cys motif which is required for import and stability of MIA40 in mitochondria.</text>
</comment>
<comment type="PTM">
    <text evidence="1">Forms intrachain disulfide bridges, but exists in different redox states.</text>
</comment>
<comment type="disruption phenotype">
    <text evidence="6">Mutants have a developmental arrest coupled with embryonic lethality at 8.5 dpc. They show a major defect in the expression of respiratory chain complex I subunit NDUFS7/CI-20.</text>
</comment>
<reference key="1">
    <citation type="journal article" date="2005" name="Science">
        <title>The transcriptional landscape of the mammalian genome.</title>
        <authorList>
            <person name="Carninci P."/>
            <person name="Kasukawa T."/>
            <person name="Katayama S."/>
            <person name="Gough J."/>
            <person name="Frith M.C."/>
            <person name="Maeda N."/>
            <person name="Oyama R."/>
            <person name="Ravasi T."/>
            <person name="Lenhard B."/>
            <person name="Wells C."/>
            <person name="Kodzius R."/>
            <person name="Shimokawa K."/>
            <person name="Bajic V.B."/>
            <person name="Brenner S.E."/>
            <person name="Batalov S."/>
            <person name="Forrest A.R."/>
            <person name="Zavolan M."/>
            <person name="Davis M.J."/>
            <person name="Wilming L.G."/>
            <person name="Aidinis V."/>
            <person name="Allen J.E."/>
            <person name="Ambesi-Impiombato A."/>
            <person name="Apweiler R."/>
            <person name="Aturaliya R.N."/>
            <person name="Bailey T.L."/>
            <person name="Bansal M."/>
            <person name="Baxter L."/>
            <person name="Beisel K.W."/>
            <person name="Bersano T."/>
            <person name="Bono H."/>
            <person name="Chalk A.M."/>
            <person name="Chiu K.P."/>
            <person name="Choudhary V."/>
            <person name="Christoffels A."/>
            <person name="Clutterbuck D.R."/>
            <person name="Crowe M.L."/>
            <person name="Dalla E."/>
            <person name="Dalrymple B.P."/>
            <person name="de Bono B."/>
            <person name="Della Gatta G."/>
            <person name="di Bernardo D."/>
            <person name="Down T."/>
            <person name="Engstrom P."/>
            <person name="Fagiolini M."/>
            <person name="Faulkner G."/>
            <person name="Fletcher C.F."/>
            <person name="Fukushima T."/>
            <person name="Furuno M."/>
            <person name="Futaki S."/>
            <person name="Gariboldi M."/>
            <person name="Georgii-Hemming P."/>
            <person name="Gingeras T.R."/>
            <person name="Gojobori T."/>
            <person name="Green R.E."/>
            <person name="Gustincich S."/>
            <person name="Harbers M."/>
            <person name="Hayashi Y."/>
            <person name="Hensch T.K."/>
            <person name="Hirokawa N."/>
            <person name="Hill D."/>
            <person name="Huminiecki L."/>
            <person name="Iacono M."/>
            <person name="Ikeo K."/>
            <person name="Iwama A."/>
            <person name="Ishikawa T."/>
            <person name="Jakt M."/>
            <person name="Kanapin A."/>
            <person name="Katoh M."/>
            <person name="Kawasawa Y."/>
            <person name="Kelso J."/>
            <person name="Kitamura H."/>
            <person name="Kitano H."/>
            <person name="Kollias G."/>
            <person name="Krishnan S.P."/>
            <person name="Kruger A."/>
            <person name="Kummerfeld S.K."/>
            <person name="Kurochkin I.V."/>
            <person name="Lareau L.F."/>
            <person name="Lazarevic D."/>
            <person name="Lipovich L."/>
            <person name="Liu J."/>
            <person name="Liuni S."/>
            <person name="McWilliam S."/>
            <person name="Madan Babu M."/>
            <person name="Madera M."/>
            <person name="Marchionni L."/>
            <person name="Matsuda H."/>
            <person name="Matsuzawa S."/>
            <person name="Miki H."/>
            <person name="Mignone F."/>
            <person name="Miyake S."/>
            <person name="Morris K."/>
            <person name="Mottagui-Tabar S."/>
            <person name="Mulder N."/>
            <person name="Nakano N."/>
            <person name="Nakauchi H."/>
            <person name="Ng P."/>
            <person name="Nilsson R."/>
            <person name="Nishiguchi S."/>
            <person name="Nishikawa S."/>
            <person name="Nori F."/>
            <person name="Ohara O."/>
            <person name="Okazaki Y."/>
            <person name="Orlando V."/>
            <person name="Pang K.C."/>
            <person name="Pavan W.J."/>
            <person name="Pavesi G."/>
            <person name="Pesole G."/>
            <person name="Petrovsky N."/>
            <person name="Piazza S."/>
            <person name="Reed J."/>
            <person name="Reid J.F."/>
            <person name="Ring B.Z."/>
            <person name="Ringwald M."/>
            <person name="Rost B."/>
            <person name="Ruan Y."/>
            <person name="Salzberg S.L."/>
            <person name="Sandelin A."/>
            <person name="Schneider C."/>
            <person name="Schoenbach C."/>
            <person name="Sekiguchi K."/>
            <person name="Semple C.A."/>
            <person name="Seno S."/>
            <person name="Sessa L."/>
            <person name="Sheng Y."/>
            <person name="Shibata Y."/>
            <person name="Shimada H."/>
            <person name="Shimada K."/>
            <person name="Silva D."/>
            <person name="Sinclair B."/>
            <person name="Sperling S."/>
            <person name="Stupka E."/>
            <person name="Sugiura K."/>
            <person name="Sultana R."/>
            <person name="Takenaka Y."/>
            <person name="Taki K."/>
            <person name="Tammoja K."/>
            <person name="Tan S.L."/>
            <person name="Tang S."/>
            <person name="Taylor M.S."/>
            <person name="Tegner J."/>
            <person name="Teichmann S.A."/>
            <person name="Ueda H.R."/>
            <person name="van Nimwegen E."/>
            <person name="Verardo R."/>
            <person name="Wei C.L."/>
            <person name="Yagi K."/>
            <person name="Yamanishi H."/>
            <person name="Zabarovsky E."/>
            <person name="Zhu S."/>
            <person name="Zimmer A."/>
            <person name="Hide W."/>
            <person name="Bult C."/>
            <person name="Grimmond S.M."/>
            <person name="Teasdale R.D."/>
            <person name="Liu E.T."/>
            <person name="Brusic V."/>
            <person name="Quackenbush J."/>
            <person name="Wahlestedt C."/>
            <person name="Mattick J.S."/>
            <person name="Hume D.A."/>
            <person name="Kai C."/>
            <person name="Sasaki D."/>
            <person name="Tomaru Y."/>
            <person name="Fukuda S."/>
            <person name="Kanamori-Katayama M."/>
            <person name="Suzuki M."/>
            <person name="Aoki J."/>
            <person name="Arakawa T."/>
            <person name="Iida J."/>
            <person name="Imamura K."/>
            <person name="Itoh M."/>
            <person name="Kato T."/>
            <person name="Kawaji H."/>
            <person name="Kawagashira N."/>
            <person name="Kawashima T."/>
            <person name="Kojima M."/>
            <person name="Kondo S."/>
            <person name="Konno H."/>
            <person name="Nakano K."/>
            <person name="Ninomiya N."/>
            <person name="Nishio T."/>
            <person name="Okada M."/>
            <person name="Plessy C."/>
            <person name="Shibata K."/>
            <person name="Shiraki T."/>
            <person name="Suzuki S."/>
            <person name="Tagami M."/>
            <person name="Waki K."/>
            <person name="Watahiki A."/>
            <person name="Okamura-Oho Y."/>
            <person name="Suzuki H."/>
            <person name="Kawai J."/>
            <person name="Hayashizaki Y."/>
        </authorList>
    </citation>
    <scope>NUCLEOTIDE SEQUENCE [LARGE SCALE MRNA]</scope>
    <source>
        <strain>C57BL/6J</strain>
    </source>
</reference>
<reference key="2">
    <citation type="journal article" date="2004" name="Genome Res.">
        <title>The status, quality, and expansion of the NIH full-length cDNA project: the Mammalian Gene Collection (MGC).</title>
        <authorList>
            <consortium name="The MGC Project Team"/>
        </authorList>
    </citation>
    <scope>NUCLEOTIDE SEQUENCE [LARGE SCALE MRNA]</scope>
    <source>
        <strain>Czech II</strain>
        <tissue>Mammary tumor</tissue>
    </source>
</reference>
<reference key="3">
    <citation type="journal article" date="2005" name="J. Mol. Biol.">
        <title>Functional and mutational characterization of human MIA40 acting during import into the mitochondrial intermembrane space.</title>
        <authorList>
            <person name="Hofmann S."/>
            <person name="Rothbauer U."/>
            <person name="Muehlenbein N."/>
            <person name="Baiker K."/>
            <person name="Hell K."/>
            <person name="Bauer M.F."/>
        </authorList>
    </citation>
    <scope>TISSUE SPECIFICITY</scope>
</reference>
<reference key="4">
    <citation type="journal article" date="2010" name="Cell">
        <title>A tissue-specific atlas of mouse protein phosphorylation and expression.</title>
        <authorList>
            <person name="Huttlin E.L."/>
            <person name="Jedrychowski M.P."/>
            <person name="Elias J.E."/>
            <person name="Goswami T."/>
            <person name="Rad R."/>
            <person name="Beausoleil S.A."/>
            <person name="Villen J."/>
            <person name="Haas W."/>
            <person name="Sowa M.E."/>
            <person name="Gygi S.P."/>
        </authorList>
    </citation>
    <scope>IDENTIFICATION BY MASS SPECTROMETRY [LARGE SCALE ANALYSIS]</scope>
    <source>
        <tissue>Brain</tissue>
        <tissue>Brown adipose tissue</tissue>
        <tissue>Heart</tissue>
        <tissue>Kidney</tissue>
        <tissue>Liver</tissue>
        <tissue>Lung</tissue>
        <tissue>Pancreas</tissue>
        <tissue>Spleen</tissue>
        <tissue>Testis</tissue>
    </source>
</reference>
<reference key="5">
    <citation type="journal article" date="2015" name="Mol. Cell">
        <title>Interaction between AIF and CHCHD4 Regulates Respiratory Chain Biogenesis.</title>
        <authorList>
            <person name="Hangen E."/>
            <person name="Feraud O."/>
            <person name="Lachkar S."/>
            <person name="Mou H."/>
            <person name="Doti N."/>
            <person name="Fimia G.M."/>
            <person name="Lam N.V."/>
            <person name="Zhu C."/>
            <person name="Godin I."/>
            <person name="Muller K."/>
            <person name="Chatzi A."/>
            <person name="Nuebel E."/>
            <person name="Ciccosanti F."/>
            <person name="Flamant S."/>
            <person name="Benit P."/>
            <person name="Perfettini J.L."/>
            <person name="Sauvat A."/>
            <person name="Bennaceur-Griscelli A."/>
            <person name="Ser-Le Roux K."/>
            <person name="Gonin P."/>
            <person name="Tokatlidis K."/>
            <person name="Rustin P."/>
            <person name="Piacentini M."/>
            <person name="Ruvo M."/>
            <person name="Blomgren K."/>
            <person name="Kroemer G."/>
            <person name="Modjtahedi N."/>
        </authorList>
    </citation>
    <scope>FUNCTION</scope>
    <scope>DISRUPTION PHENOTYPE</scope>
</reference>